<dbReference type="EMBL" id="CH408159">
    <property type="protein sequence ID" value="EDK40424.2"/>
    <property type="molecule type" value="Genomic_DNA"/>
</dbReference>
<dbReference type="RefSeq" id="XP_001483793.1">
    <property type="nucleotide sequence ID" value="XM_001483743.1"/>
</dbReference>
<dbReference type="FunCoup" id="A5DMM1">
    <property type="interactions" value="22"/>
</dbReference>
<dbReference type="STRING" id="294746.A5DMM1"/>
<dbReference type="GeneID" id="5125088"/>
<dbReference type="KEGG" id="pgu:PGUG_04522"/>
<dbReference type="VEuPathDB" id="FungiDB:PGUG_04522"/>
<dbReference type="eggNOG" id="ENOG502SAXB">
    <property type="taxonomic scope" value="Eukaryota"/>
</dbReference>
<dbReference type="HOGENOM" id="CLU_064540_0_0_1"/>
<dbReference type="InParanoid" id="A5DMM1"/>
<dbReference type="OMA" id="LMFTINM"/>
<dbReference type="OrthoDB" id="10261384at2759"/>
<dbReference type="Proteomes" id="UP000001997">
    <property type="component" value="Unassembled WGS sequence"/>
</dbReference>
<dbReference type="GO" id="GO:0030674">
    <property type="term" value="F:protein-macromolecule adaptor activity"/>
    <property type="evidence" value="ECO:0007669"/>
    <property type="project" value="TreeGrafter"/>
</dbReference>
<dbReference type="GO" id="GO:0016192">
    <property type="term" value="P:vesicle-mediated transport"/>
    <property type="evidence" value="ECO:0007669"/>
    <property type="project" value="InterPro"/>
</dbReference>
<dbReference type="Gene3D" id="3.40.50.11960">
    <property type="match status" value="1"/>
</dbReference>
<dbReference type="InterPro" id="IPR034627">
    <property type="entry name" value="Irc6"/>
</dbReference>
<dbReference type="PANTHER" id="PTHR28043">
    <property type="entry name" value="INCREASED RECOMBINATION CENTERS PROTEIN 6"/>
    <property type="match status" value="1"/>
</dbReference>
<dbReference type="PANTHER" id="PTHR28043:SF1">
    <property type="entry name" value="INCREASED RECOMBINATION CENTERS PROTEIN 6"/>
    <property type="match status" value="1"/>
</dbReference>
<dbReference type="Pfam" id="PF10199">
    <property type="entry name" value="Adaptin_binding"/>
    <property type="match status" value="1"/>
</dbReference>
<organism>
    <name type="scientific">Meyerozyma guilliermondii (strain ATCC 6260 / CBS 566 / DSM 6381 / JCM 1539 / NBRC 10279 / NRRL Y-324)</name>
    <name type="common">Yeast</name>
    <name type="synonym">Candida guilliermondii</name>
    <dbReference type="NCBI Taxonomy" id="294746"/>
    <lineage>
        <taxon>Eukaryota</taxon>
        <taxon>Fungi</taxon>
        <taxon>Dikarya</taxon>
        <taxon>Ascomycota</taxon>
        <taxon>Saccharomycotina</taxon>
        <taxon>Pichiomycetes</taxon>
        <taxon>Debaryomycetaceae</taxon>
        <taxon>Meyerozyma</taxon>
    </lineage>
</organism>
<proteinExistence type="inferred from homology"/>
<name>IRC6_PICGU</name>
<sequence length="277" mass="31285">MAQNNVLVLGAPHSGKLRASAIIGAGFSGDGDFSGSHSGLIFKIKRQTKYFKHDLSIMVDEYPEKRTITPSWEHLNAWSDEFMSEDMEELRRALDGIVFCLNLDDKATMKDLEPTIGVLEKIYESLGGAEWAGFFAIVGVSSSEDNENHAIVEDAATIRGFEYINLEEEGQNEFRDKLGIDRLVELFDTHDWSDIETSEDDGFAARKRKMAESMCQRLLDDDEKDMSSENGVNDVNVEEFENVIEKLKQARIKAESMEGAERNEYAQQVMEDVLSYL</sequence>
<reference key="1">
    <citation type="journal article" date="2009" name="Nature">
        <title>Evolution of pathogenicity and sexual reproduction in eight Candida genomes.</title>
        <authorList>
            <person name="Butler G."/>
            <person name="Rasmussen M.D."/>
            <person name="Lin M.F."/>
            <person name="Santos M.A.S."/>
            <person name="Sakthikumar S."/>
            <person name="Munro C.A."/>
            <person name="Rheinbay E."/>
            <person name="Grabherr M."/>
            <person name="Forche A."/>
            <person name="Reedy J.L."/>
            <person name="Agrafioti I."/>
            <person name="Arnaud M.B."/>
            <person name="Bates S."/>
            <person name="Brown A.J.P."/>
            <person name="Brunke S."/>
            <person name="Costanzo M.C."/>
            <person name="Fitzpatrick D.A."/>
            <person name="de Groot P.W.J."/>
            <person name="Harris D."/>
            <person name="Hoyer L.L."/>
            <person name="Hube B."/>
            <person name="Klis F.M."/>
            <person name="Kodira C."/>
            <person name="Lennard N."/>
            <person name="Logue M.E."/>
            <person name="Martin R."/>
            <person name="Neiman A.M."/>
            <person name="Nikolaou E."/>
            <person name="Quail M.A."/>
            <person name="Quinn J."/>
            <person name="Santos M.C."/>
            <person name="Schmitzberger F.F."/>
            <person name="Sherlock G."/>
            <person name="Shah P."/>
            <person name="Silverstein K.A.T."/>
            <person name="Skrzypek M.S."/>
            <person name="Soll D."/>
            <person name="Staggs R."/>
            <person name="Stansfield I."/>
            <person name="Stumpf M.P.H."/>
            <person name="Sudbery P.E."/>
            <person name="Srikantha T."/>
            <person name="Zeng Q."/>
            <person name="Berman J."/>
            <person name="Berriman M."/>
            <person name="Heitman J."/>
            <person name="Gow N.A.R."/>
            <person name="Lorenz M.C."/>
            <person name="Birren B.W."/>
            <person name="Kellis M."/>
            <person name="Cuomo C.A."/>
        </authorList>
    </citation>
    <scope>NUCLEOTIDE SEQUENCE [LARGE SCALE GENOMIC DNA]</scope>
    <source>
        <strain>ATCC 6260 / CBS 566 / DSM 6381 / JCM 1539 / NBRC 10279 / NRRL Y-324</strain>
    </source>
</reference>
<protein>
    <recommendedName>
        <fullName>Increased recombination centers protein 6</fullName>
    </recommendedName>
</protein>
<feature type="chain" id="PRO_0000399224" description="Increased recombination centers protein 6">
    <location>
        <begin position="1"/>
        <end position="277"/>
    </location>
</feature>
<evidence type="ECO:0000250" key="1"/>
<evidence type="ECO:0000305" key="2"/>
<comment type="function">
    <text evidence="1">Involved in gross chromosomal rearrangements (GCRs) and telomere healing.</text>
</comment>
<comment type="similarity">
    <text evidence="2">Belongs to the IRC6 family.</text>
</comment>
<keyword id="KW-0160">Chromosomal rearrangement</keyword>
<keyword id="KW-1185">Reference proteome</keyword>
<gene>
    <name type="primary">IRC6</name>
    <name type="ORF">PGUG_04522</name>
</gene>
<accession>A5DMM1</accession>